<accession>Q5E4D8</accession>
<organism>
    <name type="scientific">Aliivibrio fischeri (strain ATCC 700601 / ES114)</name>
    <name type="common">Vibrio fischeri</name>
    <dbReference type="NCBI Taxonomy" id="312309"/>
    <lineage>
        <taxon>Bacteria</taxon>
        <taxon>Pseudomonadati</taxon>
        <taxon>Pseudomonadota</taxon>
        <taxon>Gammaproteobacteria</taxon>
        <taxon>Vibrionales</taxon>
        <taxon>Vibrionaceae</taxon>
        <taxon>Aliivibrio</taxon>
    </lineage>
</organism>
<name>PSTB1_ALIF1</name>
<comment type="function">
    <text evidence="1">Part of the ABC transporter complex PstSACB involved in phosphate import. Responsible for energy coupling to the transport system.</text>
</comment>
<comment type="catalytic activity">
    <reaction evidence="1">
        <text>phosphate(out) + ATP + H2O = ADP + 2 phosphate(in) + H(+)</text>
        <dbReference type="Rhea" id="RHEA:24440"/>
        <dbReference type="ChEBI" id="CHEBI:15377"/>
        <dbReference type="ChEBI" id="CHEBI:15378"/>
        <dbReference type="ChEBI" id="CHEBI:30616"/>
        <dbReference type="ChEBI" id="CHEBI:43474"/>
        <dbReference type="ChEBI" id="CHEBI:456216"/>
        <dbReference type="EC" id="7.3.2.1"/>
    </reaction>
</comment>
<comment type="subunit">
    <text evidence="1">The complex is composed of two ATP-binding proteins (PstB), two transmembrane proteins (PstC and PstA) and a solute-binding protein (PstS).</text>
</comment>
<comment type="subcellular location">
    <subcellularLocation>
        <location evidence="1">Cell inner membrane</location>
        <topology evidence="1">Peripheral membrane protein</topology>
    </subcellularLocation>
</comment>
<comment type="similarity">
    <text evidence="1">Belongs to the ABC transporter superfamily. Phosphate importer (TC 3.A.1.7) family.</text>
</comment>
<sequence length="249" mass="27658">MNKFNIENLDLFYGQNQALKNINLPIPAKQVTALIGPSGCGKSTLLRCLNRMNDLIEGVKITGLVNLDGNDIYGNIDVADLRIKVGMVFQKANPFPMSIYENVAYGLKAQGVKDKKVLDAVVEKSLRGAALWDEVKDRLKSHAFGLSGGQQQRLCIARTIAMEPDVILMDEPTSALDPIATHKVEELMETLKKDYTIVIVTHSMQQARRISDKTAFFLMGELVEHDDTQIIFSNPKDDRTQGYVNGDFG</sequence>
<protein>
    <recommendedName>
        <fullName evidence="1">Phosphate import ATP-binding protein PstB 1</fullName>
        <ecNumber evidence="1">7.3.2.1</ecNumber>
    </recommendedName>
    <alternativeName>
        <fullName evidence="1">ABC phosphate transporter 1</fullName>
    </alternativeName>
    <alternativeName>
        <fullName evidence="1">Phosphate-transporting ATPase 1</fullName>
    </alternativeName>
</protein>
<proteinExistence type="inferred from homology"/>
<dbReference type="EC" id="7.3.2.1" evidence="1"/>
<dbReference type="EMBL" id="CP000020">
    <property type="protein sequence ID" value="AAW86108.1"/>
    <property type="molecule type" value="Genomic_DNA"/>
</dbReference>
<dbReference type="RefSeq" id="YP_204996.1">
    <property type="nucleotide sequence ID" value="NC_006840.2"/>
</dbReference>
<dbReference type="SMR" id="Q5E4D8"/>
<dbReference type="STRING" id="312309.VF_1613"/>
<dbReference type="EnsemblBacteria" id="AAW86108">
    <property type="protein sequence ID" value="AAW86108"/>
    <property type="gene ID" value="VF_1613"/>
</dbReference>
<dbReference type="GeneID" id="54164299"/>
<dbReference type="KEGG" id="vfi:VF_1613"/>
<dbReference type="PATRIC" id="fig|312309.11.peg.1634"/>
<dbReference type="eggNOG" id="COG1117">
    <property type="taxonomic scope" value="Bacteria"/>
</dbReference>
<dbReference type="HOGENOM" id="CLU_000604_1_22_6"/>
<dbReference type="OrthoDB" id="9802264at2"/>
<dbReference type="Proteomes" id="UP000000537">
    <property type="component" value="Chromosome I"/>
</dbReference>
<dbReference type="GO" id="GO:0005886">
    <property type="term" value="C:plasma membrane"/>
    <property type="evidence" value="ECO:0007669"/>
    <property type="project" value="UniProtKB-SubCell"/>
</dbReference>
<dbReference type="GO" id="GO:0005524">
    <property type="term" value="F:ATP binding"/>
    <property type="evidence" value="ECO:0007669"/>
    <property type="project" value="UniProtKB-KW"/>
</dbReference>
<dbReference type="GO" id="GO:0016887">
    <property type="term" value="F:ATP hydrolysis activity"/>
    <property type="evidence" value="ECO:0007669"/>
    <property type="project" value="InterPro"/>
</dbReference>
<dbReference type="GO" id="GO:0015415">
    <property type="term" value="F:ATPase-coupled phosphate ion transmembrane transporter activity"/>
    <property type="evidence" value="ECO:0007669"/>
    <property type="project" value="UniProtKB-EC"/>
</dbReference>
<dbReference type="GO" id="GO:0035435">
    <property type="term" value="P:phosphate ion transmembrane transport"/>
    <property type="evidence" value="ECO:0007669"/>
    <property type="project" value="InterPro"/>
</dbReference>
<dbReference type="CDD" id="cd03260">
    <property type="entry name" value="ABC_PstB_phosphate_transporter"/>
    <property type="match status" value="1"/>
</dbReference>
<dbReference type="FunFam" id="3.40.50.300:FF:000132">
    <property type="entry name" value="Phosphate import ATP-binding protein PstB"/>
    <property type="match status" value="1"/>
</dbReference>
<dbReference type="Gene3D" id="3.40.50.300">
    <property type="entry name" value="P-loop containing nucleotide triphosphate hydrolases"/>
    <property type="match status" value="1"/>
</dbReference>
<dbReference type="InterPro" id="IPR003593">
    <property type="entry name" value="AAA+_ATPase"/>
</dbReference>
<dbReference type="InterPro" id="IPR003439">
    <property type="entry name" value="ABC_transporter-like_ATP-bd"/>
</dbReference>
<dbReference type="InterPro" id="IPR017871">
    <property type="entry name" value="ABC_transporter-like_CS"/>
</dbReference>
<dbReference type="InterPro" id="IPR027417">
    <property type="entry name" value="P-loop_NTPase"/>
</dbReference>
<dbReference type="InterPro" id="IPR005670">
    <property type="entry name" value="PstB-like"/>
</dbReference>
<dbReference type="NCBIfam" id="TIGR00972">
    <property type="entry name" value="3a0107s01c2"/>
    <property type="match status" value="1"/>
</dbReference>
<dbReference type="PANTHER" id="PTHR43423">
    <property type="entry name" value="ABC TRANSPORTER I FAMILY MEMBER 17"/>
    <property type="match status" value="1"/>
</dbReference>
<dbReference type="PANTHER" id="PTHR43423:SF1">
    <property type="entry name" value="ABC TRANSPORTER I FAMILY MEMBER 17"/>
    <property type="match status" value="1"/>
</dbReference>
<dbReference type="Pfam" id="PF00005">
    <property type="entry name" value="ABC_tran"/>
    <property type="match status" value="1"/>
</dbReference>
<dbReference type="SMART" id="SM00382">
    <property type="entry name" value="AAA"/>
    <property type="match status" value="1"/>
</dbReference>
<dbReference type="SUPFAM" id="SSF52540">
    <property type="entry name" value="P-loop containing nucleoside triphosphate hydrolases"/>
    <property type="match status" value="1"/>
</dbReference>
<dbReference type="PROSITE" id="PS00211">
    <property type="entry name" value="ABC_TRANSPORTER_1"/>
    <property type="match status" value="1"/>
</dbReference>
<dbReference type="PROSITE" id="PS50893">
    <property type="entry name" value="ABC_TRANSPORTER_2"/>
    <property type="match status" value="1"/>
</dbReference>
<dbReference type="PROSITE" id="PS51238">
    <property type="entry name" value="PSTB"/>
    <property type="match status" value="1"/>
</dbReference>
<reference key="1">
    <citation type="journal article" date="2005" name="Proc. Natl. Acad. Sci. U.S.A.">
        <title>Complete genome sequence of Vibrio fischeri: a symbiotic bacterium with pathogenic congeners.</title>
        <authorList>
            <person name="Ruby E.G."/>
            <person name="Urbanowski M."/>
            <person name="Campbell J."/>
            <person name="Dunn A."/>
            <person name="Faini M."/>
            <person name="Gunsalus R."/>
            <person name="Lostroh P."/>
            <person name="Lupp C."/>
            <person name="McCann J."/>
            <person name="Millikan D."/>
            <person name="Schaefer A."/>
            <person name="Stabb E."/>
            <person name="Stevens A."/>
            <person name="Visick K."/>
            <person name="Whistler C."/>
            <person name="Greenberg E.P."/>
        </authorList>
    </citation>
    <scope>NUCLEOTIDE SEQUENCE [LARGE SCALE GENOMIC DNA]</scope>
    <source>
        <strain>ATCC 700601 / ES114</strain>
    </source>
</reference>
<gene>
    <name evidence="1" type="primary">pstB1</name>
    <name type="ordered locus">VF_1613</name>
</gene>
<evidence type="ECO:0000255" key="1">
    <source>
        <dbReference type="HAMAP-Rule" id="MF_01702"/>
    </source>
</evidence>
<keyword id="KW-0067">ATP-binding</keyword>
<keyword id="KW-0997">Cell inner membrane</keyword>
<keyword id="KW-1003">Cell membrane</keyword>
<keyword id="KW-0472">Membrane</keyword>
<keyword id="KW-0547">Nucleotide-binding</keyword>
<keyword id="KW-0592">Phosphate transport</keyword>
<keyword id="KW-1185">Reference proteome</keyword>
<keyword id="KW-1278">Translocase</keyword>
<keyword id="KW-0813">Transport</keyword>
<feature type="chain" id="PRO_0000272571" description="Phosphate import ATP-binding protein PstB 1">
    <location>
        <begin position="1"/>
        <end position="249"/>
    </location>
</feature>
<feature type="domain" description="ABC transporter" evidence="1">
    <location>
        <begin position="4"/>
        <end position="244"/>
    </location>
</feature>
<feature type="binding site" evidence="1">
    <location>
        <begin position="36"/>
        <end position="43"/>
    </location>
    <ligand>
        <name>ATP</name>
        <dbReference type="ChEBI" id="CHEBI:30616"/>
    </ligand>
</feature>